<reference key="1">
    <citation type="journal article" date="2006" name="J. Bacteriol.">
        <title>Living with genome instability: the adaptation of phytoplasmas to diverse environments of their insect and plant hosts.</title>
        <authorList>
            <person name="Bai X."/>
            <person name="Zhang J."/>
            <person name="Ewing A."/>
            <person name="Miller S.A."/>
            <person name="Jancso Radek A."/>
            <person name="Shevchenko D.V."/>
            <person name="Tsukerman K."/>
            <person name="Walunas T."/>
            <person name="Lapidus A."/>
            <person name="Campbell J.W."/>
            <person name="Hogenhout S.A."/>
        </authorList>
    </citation>
    <scope>NUCLEOTIDE SEQUENCE [LARGE SCALE GENOMIC DNA]</scope>
    <source>
        <strain>AYWB</strain>
    </source>
</reference>
<evidence type="ECO:0000255" key="1">
    <source>
        <dbReference type="HAMAP-Rule" id="MF_01341"/>
    </source>
</evidence>
<evidence type="ECO:0000256" key="2">
    <source>
        <dbReference type="SAM" id="MobiDB-lite"/>
    </source>
</evidence>
<evidence type="ECO:0000305" key="3"/>
<protein>
    <recommendedName>
        <fullName evidence="1">Large ribosomal subunit protein uL15</fullName>
    </recommendedName>
    <alternativeName>
        <fullName evidence="3">50S ribosomal protein L15</fullName>
    </alternativeName>
</protein>
<accession>Q2NIX3</accession>
<sequence>MLHTIKPVTNARKSTKRLGRGPGSGTGKTSGKGHKGQLARSGKTLRPGFEGGQIPFFQRIPKRGFHNFSQKRYALLNLKTLESFPQDTVVTPQLLLEKKIIKDQLCGIKVLSQGTLTKKLLVKASKFSKQAQAAILAVGGNIEVI</sequence>
<organism>
    <name type="scientific">Aster yellows witches'-broom phytoplasma (strain AYWB)</name>
    <dbReference type="NCBI Taxonomy" id="322098"/>
    <lineage>
        <taxon>Bacteria</taxon>
        <taxon>Bacillati</taxon>
        <taxon>Mycoplasmatota</taxon>
        <taxon>Mollicutes</taxon>
        <taxon>Acholeplasmatales</taxon>
        <taxon>Acholeplasmataceae</taxon>
        <taxon>Candidatus Phytoplasma</taxon>
        <taxon>16SrI (Aster yellows group)</taxon>
    </lineage>
</organism>
<comment type="function">
    <text evidence="1">Binds to the 23S rRNA.</text>
</comment>
<comment type="subunit">
    <text evidence="1">Part of the 50S ribosomal subunit.</text>
</comment>
<comment type="similarity">
    <text evidence="1">Belongs to the universal ribosomal protein uL15 family.</text>
</comment>
<dbReference type="EMBL" id="CP000061">
    <property type="protein sequence ID" value="ABC65620.1"/>
    <property type="molecule type" value="Genomic_DNA"/>
</dbReference>
<dbReference type="RefSeq" id="WP_011412782.1">
    <property type="nucleotide sequence ID" value="NC_007716.1"/>
</dbReference>
<dbReference type="SMR" id="Q2NIX3"/>
<dbReference type="STRING" id="322098.AYWB_503"/>
<dbReference type="KEGG" id="ayw:AYWB_503"/>
<dbReference type="eggNOG" id="COG0200">
    <property type="taxonomic scope" value="Bacteria"/>
</dbReference>
<dbReference type="HOGENOM" id="CLU_055188_4_2_14"/>
<dbReference type="OrthoDB" id="9810293at2"/>
<dbReference type="PhylomeDB" id="Q2NIX3"/>
<dbReference type="Proteomes" id="UP000001934">
    <property type="component" value="Chromosome"/>
</dbReference>
<dbReference type="GO" id="GO:0022625">
    <property type="term" value="C:cytosolic large ribosomal subunit"/>
    <property type="evidence" value="ECO:0007669"/>
    <property type="project" value="TreeGrafter"/>
</dbReference>
<dbReference type="GO" id="GO:0019843">
    <property type="term" value="F:rRNA binding"/>
    <property type="evidence" value="ECO:0007669"/>
    <property type="project" value="UniProtKB-UniRule"/>
</dbReference>
<dbReference type="GO" id="GO:0003735">
    <property type="term" value="F:structural constituent of ribosome"/>
    <property type="evidence" value="ECO:0007669"/>
    <property type="project" value="InterPro"/>
</dbReference>
<dbReference type="GO" id="GO:0006412">
    <property type="term" value="P:translation"/>
    <property type="evidence" value="ECO:0007669"/>
    <property type="project" value="UniProtKB-UniRule"/>
</dbReference>
<dbReference type="Gene3D" id="3.100.10.10">
    <property type="match status" value="1"/>
</dbReference>
<dbReference type="HAMAP" id="MF_01341">
    <property type="entry name" value="Ribosomal_uL15"/>
    <property type="match status" value="1"/>
</dbReference>
<dbReference type="InterPro" id="IPR030878">
    <property type="entry name" value="Ribosomal_uL15"/>
</dbReference>
<dbReference type="InterPro" id="IPR021131">
    <property type="entry name" value="Ribosomal_uL15/eL18"/>
</dbReference>
<dbReference type="InterPro" id="IPR036227">
    <property type="entry name" value="Ribosomal_uL15/eL18_sf"/>
</dbReference>
<dbReference type="InterPro" id="IPR005749">
    <property type="entry name" value="Ribosomal_uL15_bac-type"/>
</dbReference>
<dbReference type="InterPro" id="IPR001196">
    <property type="entry name" value="Ribosomal_uL15_CS"/>
</dbReference>
<dbReference type="NCBIfam" id="TIGR01071">
    <property type="entry name" value="rplO_bact"/>
    <property type="match status" value="1"/>
</dbReference>
<dbReference type="PANTHER" id="PTHR12934">
    <property type="entry name" value="50S RIBOSOMAL PROTEIN L15"/>
    <property type="match status" value="1"/>
</dbReference>
<dbReference type="PANTHER" id="PTHR12934:SF11">
    <property type="entry name" value="LARGE RIBOSOMAL SUBUNIT PROTEIN UL15M"/>
    <property type="match status" value="1"/>
</dbReference>
<dbReference type="Pfam" id="PF00828">
    <property type="entry name" value="Ribosomal_L27A"/>
    <property type="match status" value="1"/>
</dbReference>
<dbReference type="SUPFAM" id="SSF52080">
    <property type="entry name" value="Ribosomal proteins L15p and L18e"/>
    <property type="match status" value="1"/>
</dbReference>
<dbReference type="PROSITE" id="PS00475">
    <property type="entry name" value="RIBOSOMAL_L15"/>
    <property type="match status" value="1"/>
</dbReference>
<name>RL15_AYWBP</name>
<proteinExistence type="inferred from homology"/>
<gene>
    <name evidence="1" type="primary">rplO</name>
    <name type="ordered locus">AYWB_503</name>
</gene>
<keyword id="KW-0687">Ribonucleoprotein</keyword>
<keyword id="KW-0689">Ribosomal protein</keyword>
<keyword id="KW-0694">RNA-binding</keyword>
<keyword id="KW-0699">rRNA-binding</keyword>
<feature type="chain" id="PRO_0000251488" description="Large ribosomal subunit protein uL15">
    <location>
        <begin position="1"/>
        <end position="145"/>
    </location>
</feature>
<feature type="region of interest" description="Disordered" evidence="2">
    <location>
        <begin position="1"/>
        <end position="50"/>
    </location>
</feature>
<feature type="compositionally biased region" description="Gly residues" evidence="2">
    <location>
        <begin position="20"/>
        <end position="30"/>
    </location>
</feature>